<accession>A0A1D8PPN6</accession>
<sequence length="131" mass="14957">MATSVPHPKIVKKYTKKFKRHHSDRYHRVAENWRKQKGIDSCVRRRFRGTIPQPNIGYGSNKKTKFLNPAGYKVYLVKNVKDLDVLLLHTKSYAAEIASSVSSRKRVEIVAKAKKLGVKVTNPKGKLNLEA</sequence>
<dbReference type="EMBL" id="CP017628">
    <property type="protein sequence ID" value="AOW30107.1"/>
    <property type="molecule type" value="Genomic_DNA"/>
</dbReference>
<dbReference type="RefSeq" id="XP_019331001.1">
    <property type="nucleotide sequence ID" value="XM_019475456.1"/>
</dbReference>
<dbReference type="PDB" id="7PZY">
    <property type="method" value="EM"/>
    <property type="resolution" value="2.32 A"/>
    <property type="chains" value="AF=1-131"/>
</dbReference>
<dbReference type="PDB" id="7Q08">
    <property type="method" value="EM"/>
    <property type="resolution" value="2.56 A"/>
    <property type="chains" value="AF=1-131"/>
</dbReference>
<dbReference type="PDB" id="7Q0F">
    <property type="method" value="EM"/>
    <property type="resolution" value="2.64 A"/>
    <property type="chains" value="AF=1-131"/>
</dbReference>
<dbReference type="PDB" id="7Q0P">
    <property type="method" value="EM"/>
    <property type="resolution" value="2.77 A"/>
    <property type="chains" value="AF=1-131"/>
</dbReference>
<dbReference type="PDB" id="7Q0R">
    <property type="method" value="EM"/>
    <property type="resolution" value="2.67 A"/>
    <property type="chains" value="AF=1-131"/>
</dbReference>
<dbReference type="PDBsum" id="7PZY"/>
<dbReference type="PDBsum" id="7Q08"/>
<dbReference type="PDBsum" id="7Q0F"/>
<dbReference type="PDBsum" id="7Q0P"/>
<dbReference type="PDBsum" id="7Q0R"/>
<dbReference type="EMDB" id="EMD-13737"/>
<dbReference type="EMDB" id="EMD-13741"/>
<dbReference type="EMDB" id="EMD-13744"/>
<dbReference type="EMDB" id="EMD-13749"/>
<dbReference type="EMDB" id="EMD-13750"/>
<dbReference type="SMR" id="A0A1D8PPN6"/>
<dbReference type="FunCoup" id="A0A1D8PPN6">
    <property type="interactions" value="1031"/>
</dbReference>
<dbReference type="STRING" id="237561.A0A1D8PPN6"/>
<dbReference type="EnsemblFungi" id="C6_01700W_A-T">
    <property type="protein sequence ID" value="C6_01700W_A-T-p1"/>
    <property type="gene ID" value="C6_01700W_A"/>
</dbReference>
<dbReference type="GeneID" id="30515335"/>
<dbReference type="KEGG" id="cal:CAALFM_C601700WA"/>
<dbReference type="CGD" id="CAL0000179592">
    <property type="gene designation" value="RPL32"/>
</dbReference>
<dbReference type="VEuPathDB" id="FungiDB:C6_01700W_A"/>
<dbReference type="InParanoid" id="A0A1D8PPN6"/>
<dbReference type="OrthoDB" id="268693at2759"/>
<dbReference type="Proteomes" id="UP000000559">
    <property type="component" value="Chromosome 6"/>
</dbReference>
<dbReference type="GO" id="GO:0022625">
    <property type="term" value="C:cytosolic large ribosomal subunit"/>
    <property type="evidence" value="ECO:0000316"/>
    <property type="project" value="CGD"/>
</dbReference>
<dbReference type="GO" id="GO:0003735">
    <property type="term" value="F:structural constituent of ribosome"/>
    <property type="evidence" value="ECO:0000316"/>
    <property type="project" value="CGD"/>
</dbReference>
<dbReference type="GO" id="GO:0006412">
    <property type="term" value="P:translation"/>
    <property type="evidence" value="ECO:0000316"/>
    <property type="project" value="CGD"/>
</dbReference>
<dbReference type="CDD" id="cd00513">
    <property type="entry name" value="Ribosomal_L32_L32e"/>
    <property type="match status" value="1"/>
</dbReference>
<dbReference type="InterPro" id="IPR001515">
    <property type="entry name" value="Ribosomal_eL32"/>
</dbReference>
<dbReference type="InterPro" id="IPR018263">
    <property type="entry name" value="Ribosomal_eL32_CS"/>
</dbReference>
<dbReference type="InterPro" id="IPR036351">
    <property type="entry name" value="Ribosomal_eL32_sf"/>
</dbReference>
<dbReference type="PANTHER" id="PTHR23413">
    <property type="entry name" value="60S RIBOSOMAL PROTEIN L32 AND DNA-DIRECTED RNA POLYMERASE II, SUBUNIT N"/>
    <property type="match status" value="1"/>
</dbReference>
<dbReference type="PANTHER" id="PTHR23413:SF1">
    <property type="entry name" value="RIBOSOMAL PROTEIN L32"/>
    <property type="match status" value="1"/>
</dbReference>
<dbReference type="Pfam" id="PF01655">
    <property type="entry name" value="Ribosomal_L32e"/>
    <property type="match status" value="1"/>
</dbReference>
<dbReference type="SMART" id="SM01393">
    <property type="entry name" value="Ribosomal_L32e"/>
    <property type="match status" value="1"/>
</dbReference>
<dbReference type="SUPFAM" id="SSF52042">
    <property type="entry name" value="Ribosomal protein L32e"/>
    <property type="match status" value="1"/>
</dbReference>
<dbReference type="PROSITE" id="PS00580">
    <property type="entry name" value="RIBOSOMAL_L32E"/>
    <property type="match status" value="1"/>
</dbReference>
<proteinExistence type="evidence at protein level"/>
<keyword id="KW-0002">3D-structure</keyword>
<keyword id="KW-0963">Cytoplasm</keyword>
<keyword id="KW-1185">Reference proteome</keyword>
<keyword id="KW-0687">Ribonucleoprotein</keyword>
<keyword id="KW-0689">Ribosomal protein</keyword>
<gene>
    <name evidence="2" type="primary">RPL32</name>
    <name type="ORF">CAALFM_C601700WA</name>
</gene>
<comment type="function">
    <text evidence="4">Component of the ribosome, a large ribonucleoprotein complex responsible for the synthesis of proteins in the cell. The small ribosomal subunit (SSU) binds messenger RNAs (mRNAs) and translates the encoded message by selecting cognate aminoacyl-transfer RNA (tRNA) molecules. The large subunit (LSU) contains the ribosomal catalytic site termed the peptidyl transferase center (PTC), which catalyzes the formation of peptide bonds, thereby polymerizing the amino acids delivered by tRNAs into a polypeptide chain. The nascent polypeptides leave the ribosome through a tunnel in the LSU and interact with protein factors that function in enzymatic processing, targeting, and the membrane insertion of nascent chains at the exit of the ribosomal tunnel.</text>
</comment>
<comment type="subunit">
    <text evidence="1">Component of the large ribosomal subunit (PubMed:35613268). Mature ribosomes consist of a small (40S) and a large (60S) subunit (PubMed:35613268). The 40S subunit contains about 32 different proteins and 1 molecule of RNA (18S) (PubMed:35613268). The 60S subunit contains 45 different proteins and 3 molecules of RNA (25S, 5.8S and 5S) (PubMed:35613268).</text>
</comment>
<comment type="subcellular location">
    <subcellularLocation>
        <location evidence="4">Cytoplasm</location>
    </subcellularLocation>
</comment>
<comment type="similarity">
    <text evidence="3">Belongs to the eukaryotic ribosomal protein eL32 family.</text>
</comment>
<reference key="1">
    <citation type="journal article" date="2004" name="Proc. Natl. Acad. Sci. U.S.A.">
        <title>The diploid genome sequence of Candida albicans.</title>
        <authorList>
            <person name="Jones T."/>
            <person name="Federspiel N.A."/>
            <person name="Chibana H."/>
            <person name="Dungan J."/>
            <person name="Kalman S."/>
            <person name="Magee B.B."/>
            <person name="Newport G."/>
            <person name="Thorstenson Y.R."/>
            <person name="Agabian N."/>
            <person name="Magee P.T."/>
            <person name="Davis R.W."/>
            <person name="Scherer S."/>
        </authorList>
    </citation>
    <scope>NUCLEOTIDE SEQUENCE [LARGE SCALE GENOMIC DNA]</scope>
    <source>
        <strain>SC5314 / ATCC MYA-2876</strain>
    </source>
</reference>
<reference key="2">
    <citation type="journal article" date="2007" name="Genome Biol.">
        <title>Assembly of the Candida albicans genome into sixteen supercontigs aligned on the eight chromosomes.</title>
        <authorList>
            <person name="van het Hoog M."/>
            <person name="Rast T.J."/>
            <person name="Martchenko M."/>
            <person name="Grindle S."/>
            <person name="Dignard D."/>
            <person name="Hogues H."/>
            <person name="Cuomo C."/>
            <person name="Berriman M."/>
            <person name="Scherer S."/>
            <person name="Magee B.B."/>
            <person name="Whiteway M."/>
            <person name="Chibana H."/>
            <person name="Nantel A."/>
            <person name="Magee P.T."/>
        </authorList>
    </citation>
    <scope>GENOME REANNOTATION</scope>
    <source>
        <strain>SC5314 / ATCC MYA-2876</strain>
    </source>
</reference>
<reference key="3">
    <citation type="journal article" date="2013" name="Genome Biol.">
        <title>Assembly of a phased diploid Candida albicans genome facilitates allele-specific measurements and provides a simple model for repeat and indel structure.</title>
        <authorList>
            <person name="Muzzey D."/>
            <person name="Schwartz K."/>
            <person name="Weissman J.S."/>
            <person name="Sherlock G."/>
        </authorList>
    </citation>
    <scope>NUCLEOTIDE SEQUENCE [LARGE SCALE GENOMIC DNA]</scope>
    <scope>GENOME REANNOTATION</scope>
    <source>
        <strain>SC5314 / ATCC MYA-2876</strain>
    </source>
</reference>
<reference evidence="5 6 7" key="4">
    <citation type="journal article" date="2022" name="Sci. Adv.">
        <title>E-site drug specificity of the human pathogen Candida albicans ribosome.</title>
        <authorList>
            <person name="Zgadzay Y."/>
            <person name="Kolosova O."/>
            <person name="Stetsenko A."/>
            <person name="Wu C."/>
            <person name="Bruchlen D."/>
            <person name="Usachev K."/>
            <person name="Validov S."/>
            <person name="Jenner L."/>
            <person name="Rogachev A."/>
            <person name="Yusupova G."/>
            <person name="Sachs M.S."/>
            <person name="Guskov A."/>
            <person name="Yusupov M."/>
        </authorList>
    </citation>
    <scope>STRUCTURE BY ELECTRON MICROSCOPY (2.32 ANGSTROMS) OF THE 80S RIBOSOME</scope>
    <scope>SUBUNIT</scope>
</reference>
<organism>
    <name type="scientific">Candida albicans (strain SC5314 / ATCC MYA-2876)</name>
    <name type="common">Yeast</name>
    <dbReference type="NCBI Taxonomy" id="237561"/>
    <lineage>
        <taxon>Eukaryota</taxon>
        <taxon>Fungi</taxon>
        <taxon>Dikarya</taxon>
        <taxon>Ascomycota</taxon>
        <taxon>Saccharomycotina</taxon>
        <taxon>Pichiomycetes</taxon>
        <taxon>Debaryomycetaceae</taxon>
        <taxon>Candida/Lodderomyces clade</taxon>
        <taxon>Candida</taxon>
    </lineage>
</organism>
<evidence type="ECO:0000269" key="1">
    <source>
    </source>
</evidence>
<evidence type="ECO:0000303" key="2">
    <source>
    </source>
</evidence>
<evidence type="ECO:0000305" key="3"/>
<evidence type="ECO:0000305" key="4">
    <source>
    </source>
</evidence>
<evidence type="ECO:0007744" key="5">
    <source>
        <dbReference type="PDB" id="7PZY"/>
    </source>
</evidence>
<evidence type="ECO:0007744" key="6">
    <source>
        <dbReference type="PDB" id="7Q0F"/>
    </source>
</evidence>
<evidence type="ECO:0007744" key="7">
    <source>
        <dbReference type="PDB" id="7Q0P"/>
    </source>
</evidence>
<protein>
    <recommendedName>
        <fullName evidence="2">Large ribosomal subunit protein eL32</fullName>
    </recommendedName>
    <alternativeName>
        <fullName>60S ribosomal protein L32</fullName>
    </alternativeName>
</protein>
<name>RL32_CANAL</name>
<feature type="chain" id="PRO_0000456507" description="Large ribosomal subunit protein eL32">
    <location>
        <begin position="1"/>
        <end position="131"/>
    </location>
</feature>